<reference key="1">
    <citation type="journal article" date="2003" name="Proc. Natl. Acad. Sci. U.S.A.">
        <title>The complete genome sequence of Mycobacterium bovis.</title>
        <authorList>
            <person name="Garnier T."/>
            <person name="Eiglmeier K."/>
            <person name="Camus J.-C."/>
            <person name="Medina N."/>
            <person name="Mansoor H."/>
            <person name="Pryor M."/>
            <person name="Duthoy S."/>
            <person name="Grondin S."/>
            <person name="Lacroix C."/>
            <person name="Monsempe C."/>
            <person name="Simon S."/>
            <person name="Harris B."/>
            <person name="Atkin R."/>
            <person name="Doggett J."/>
            <person name="Mayes R."/>
            <person name="Keating L."/>
            <person name="Wheeler P.R."/>
            <person name="Parkhill J."/>
            <person name="Barrell B.G."/>
            <person name="Cole S.T."/>
            <person name="Gordon S.V."/>
            <person name="Hewinson R.G."/>
        </authorList>
    </citation>
    <scope>NUCLEOTIDE SEQUENCE [LARGE SCALE GENOMIC DNA]</scope>
    <source>
        <strain>ATCC BAA-935 / AF2122/97</strain>
    </source>
</reference>
<reference key="2">
    <citation type="journal article" date="2017" name="Genome Announc.">
        <title>Updated reference genome sequence and annotation of Mycobacterium bovis AF2122/97.</title>
        <authorList>
            <person name="Malone K.M."/>
            <person name="Farrell D."/>
            <person name="Stuber T.P."/>
            <person name="Schubert O.T."/>
            <person name="Aebersold R."/>
            <person name="Robbe-Austerman S."/>
            <person name="Gordon S.V."/>
        </authorList>
    </citation>
    <scope>NUCLEOTIDE SEQUENCE [LARGE SCALE GENOMIC DNA]</scope>
    <scope>GENOME REANNOTATION</scope>
    <source>
        <strain>ATCC BAA-935 / AF2122/97</strain>
    </source>
</reference>
<reference key="3">
    <citation type="journal article" date="2005" name="FEMS Microbiol. Lett.">
        <title>Thiol specific oxidative stress response in Mycobacteria.</title>
        <authorList>
            <person name="Dosanjh N.S."/>
            <person name="Rawat M."/>
            <person name="Chung J.-H."/>
            <person name="Av-Gay Y."/>
        </authorList>
    </citation>
    <scope>IDENTIFICATION BY MASS SPECTROMETRY</scope>
    <scope>INDUCTION</scope>
    <source>
        <strain>BCG / Pasteur</strain>
    </source>
</reference>
<accession>P0A519</accession>
<accession>A0A1R3Y478</accession>
<accession>Q59573</accession>
<accession>Q59581</accession>
<accession>X2BN75</accession>
<name>CH601_MYCBO</name>
<sequence length="539" mass="55877">MSKLIEYDETARRAMEVGMDKLADTVRVTLGPRGRHVVLAKAFGGPTVTNDGVTVAREIELEDPFEDLGAQLVKSVATKTNDVAGDGTTTATILAQALIKGGLRLVAAGVNPIALGVGIGKAADAVSEALLASATPVSGKTGIAQVATVSSRDEQIGDLVGEAMSKVGHDGVVSVEESSTLGTELEFTEGIGFDKGFLSAYFVTDFDNQQAVLEDALILLHQDKISSLPDLLPLLEKVAGTGKPLLIVAEDVEGEALATLVVNAIRKTLKAVAVKGPYFGDRRKAFLEDLAVVTGGQVVNPDAGMVLREVGLEVLGSARRVVVSKDDTVIVDGGGTAEAVANRAKHLRAEIDKSDSDWDREKLGERLAKLAGGVAVIKVGAATETALKERKESVEDAVAAAKAAVEEGIVPGGGASLIHQARKALTELRASLTGDEVLGVDVFSEALAAPLFWIAANAGLDGSVVVNKVSELPAGHGLNVNTLSYGDLAADGVIDPVKVTRSAVLNASSVARMVLTTETVVVDKPAKAEDHDHHHGHAH</sequence>
<comment type="function">
    <text evidence="1">Together with its co-chaperonin GroES, plays an essential role in assisting protein folding. The GroEL-GroES system forms a nano-cage that allows encapsulation of the non-native substrate proteins and provides a physical environment optimized to promote and accelerate protein folding.</text>
</comment>
<comment type="catalytic activity">
    <reaction evidence="1">
        <text>ATP + H2O + a folded polypeptide = ADP + phosphate + an unfolded polypeptide.</text>
        <dbReference type="EC" id="5.6.1.7"/>
    </reaction>
</comment>
<comment type="subunit">
    <text evidence="1">Forms a cylinder of 14 subunits composed of two heptameric rings stacked back-to-back. Interacts with the co-chaperonin GroES.</text>
</comment>
<comment type="subcellular location">
    <subcellularLocation>
        <location evidence="1">Cytoplasm</location>
    </subcellularLocation>
</comment>
<comment type="induction">
    <text evidence="2">Induced in response to the thiol oxidant diamide.</text>
</comment>
<comment type="similarity">
    <text evidence="1">Belongs to the chaperonin (HSP60) family.</text>
</comment>
<gene>
    <name evidence="1" type="primary">groEL1</name>
    <name evidence="1" type="synonym">groL1</name>
    <name type="ordered locus">BQ2027_MB3451C</name>
</gene>
<proteinExistence type="evidence at protein level"/>
<feature type="chain" id="PRO_0000063423" description="Chaperonin GroEL 1">
    <location>
        <begin position="1"/>
        <end position="539"/>
    </location>
</feature>
<feature type="binding site" evidence="1">
    <location>
        <begin position="29"/>
        <end position="32"/>
    </location>
    <ligand>
        <name>ATP</name>
        <dbReference type="ChEBI" id="CHEBI:30616"/>
    </ligand>
</feature>
<feature type="binding site" evidence="1">
    <location>
        <begin position="86"/>
        <end position="90"/>
    </location>
    <ligand>
        <name>ATP</name>
        <dbReference type="ChEBI" id="CHEBI:30616"/>
    </ligand>
</feature>
<feature type="binding site" evidence="1">
    <location>
        <position position="413"/>
    </location>
    <ligand>
        <name>ATP</name>
        <dbReference type="ChEBI" id="CHEBI:30616"/>
    </ligand>
</feature>
<feature type="binding site" evidence="1">
    <location>
        <position position="495"/>
    </location>
    <ligand>
        <name>ATP</name>
        <dbReference type="ChEBI" id="CHEBI:30616"/>
    </ligand>
</feature>
<dbReference type="EC" id="5.6.1.7" evidence="1"/>
<dbReference type="EMBL" id="LT708304">
    <property type="protein sequence ID" value="SIU02079.1"/>
    <property type="molecule type" value="Genomic_DNA"/>
</dbReference>
<dbReference type="RefSeq" id="NP_857091.1">
    <property type="nucleotide sequence ID" value="NC_002945.3"/>
</dbReference>
<dbReference type="SMR" id="P0A519"/>
<dbReference type="KEGG" id="mbo:BQ2027_MB3451C"/>
<dbReference type="PATRIC" id="fig|233413.5.peg.3786"/>
<dbReference type="Proteomes" id="UP000001419">
    <property type="component" value="Chromosome"/>
</dbReference>
<dbReference type="GO" id="GO:0005737">
    <property type="term" value="C:cytoplasm"/>
    <property type="evidence" value="ECO:0007669"/>
    <property type="project" value="UniProtKB-SubCell"/>
</dbReference>
<dbReference type="GO" id="GO:0005524">
    <property type="term" value="F:ATP binding"/>
    <property type="evidence" value="ECO:0007669"/>
    <property type="project" value="UniProtKB-UniRule"/>
</dbReference>
<dbReference type="GO" id="GO:0140662">
    <property type="term" value="F:ATP-dependent protein folding chaperone"/>
    <property type="evidence" value="ECO:0007669"/>
    <property type="project" value="InterPro"/>
</dbReference>
<dbReference type="GO" id="GO:0016853">
    <property type="term" value="F:isomerase activity"/>
    <property type="evidence" value="ECO:0007669"/>
    <property type="project" value="UniProtKB-KW"/>
</dbReference>
<dbReference type="GO" id="GO:0051082">
    <property type="term" value="F:unfolded protein binding"/>
    <property type="evidence" value="ECO:0007669"/>
    <property type="project" value="UniProtKB-UniRule"/>
</dbReference>
<dbReference type="GO" id="GO:0042026">
    <property type="term" value="P:protein refolding"/>
    <property type="evidence" value="ECO:0007669"/>
    <property type="project" value="UniProtKB-UniRule"/>
</dbReference>
<dbReference type="CDD" id="cd03344">
    <property type="entry name" value="GroEL"/>
    <property type="match status" value="1"/>
</dbReference>
<dbReference type="FunFam" id="3.50.7.10:FF:000001">
    <property type="entry name" value="60 kDa chaperonin"/>
    <property type="match status" value="1"/>
</dbReference>
<dbReference type="Gene3D" id="3.50.7.10">
    <property type="entry name" value="GroEL"/>
    <property type="match status" value="1"/>
</dbReference>
<dbReference type="Gene3D" id="1.10.560.10">
    <property type="entry name" value="GroEL-like equatorial domain"/>
    <property type="match status" value="1"/>
</dbReference>
<dbReference type="Gene3D" id="3.30.260.10">
    <property type="entry name" value="TCP-1-like chaperonin intermediate domain"/>
    <property type="match status" value="1"/>
</dbReference>
<dbReference type="HAMAP" id="MF_00600">
    <property type="entry name" value="CH60"/>
    <property type="match status" value="1"/>
</dbReference>
<dbReference type="InterPro" id="IPR018370">
    <property type="entry name" value="Chaperonin_Cpn60_CS"/>
</dbReference>
<dbReference type="InterPro" id="IPR001844">
    <property type="entry name" value="Cpn60/GroEL"/>
</dbReference>
<dbReference type="InterPro" id="IPR002423">
    <property type="entry name" value="Cpn60/GroEL/TCP-1"/>
</dbReference>
<dbReference type="InterPro" id="IPR027409">
    <property type="entry name" value="GroEL-like_apical_dom_sf"/>
</dbReference>
<dbReference type="InterPro" id="IPR027413">
    <property type="entry name" value="GROEL-like_equatorial_sf"/>
</dbReference>
<dbReference type="InterPro" id="IPR027410">
    <property type="entry name" value="TCP-1-like_intermed_sf"/>
</dbReference>
<dbReference type="NCBIfam" id="TIGR02348">
    <property type="entry name" value="GroEL"/>
    <property type="match status" value="1"/>
</dbReference>
<dbReference type="NCBIfam" id="NF000592">
    <property type="entry name" value="PRK00013.1"/>
    <property type="match status" value="1"/>
</dbReference>
<dbReference type="NCBIfam" id="NF009487">
    <property type="entry name" value="PRK12849.1"/>
    <property type="match status" value="1"/>
</dbReference>
<dbReference type="NCBIfam" id="NF009488">
    <property type="entry name" value="PRK12850.1"/>
    <property type="match status" value="1"/>
</dbReference>
<dbReference type="NCBIfam" id="NF009489">
    <property type="entry name" value="PRK12851.1"/>
    <property type="match status" value="1"/>
</dbReference>
<dbReference type="PANTHER" id="PTHR45633">
    <property type="entry name" value="60 KDA HEAT SHOCK PROTEIN, MITOCHONDRIAL"/>
    <property type="match status" value="1"/>
</dbReference>
<dbReference type="Pfam" id="PF00118">
    <property type="entry name" value="Cpn60_TCP1"/>
    <property type="match status" value="1"/>
</dbReference>
<dbReference type="PRINTS" id="PR00298">
    <property type="entry name" value="CHAPERONIN60"/>
</dbReference>
<dbReference type="SUPFAM" id="SSF52029">
    <property type="entry name" value="GroEL apical domain-like"/>
    <property type="match status" value="1"/>
</dbReference>
<dbReference type="SUPFAM" id="SSF48592">
    <property type="entry name" value="GroEL equatorial domain-like"/>
    <property type="match status" value="1"/>
</dbReference>
<dbReference type="SUPFAM" id="SSF54849">
    <property type="entry name" value="GroEL-intermediate domain like"/>
    <property type="match status" value="1"/>
</dbReference>
<dbReference type="PROSITE" id="PS00296">
    <property type="entry name" value="CHAPERONINS_CPN60"/>
    <property type="match status" value="1"/>
</dbReference>
<protein>
    <recommendedName>
        <fullName evidence="1">Chaperonin GroEL 1</fullName>
        <ecNumber evidence="1">5.6.1.7</ecNumber>
    </recommendedName>
    <alternativeName>
        <fullName evidence="1">60 kDa chaperonin 1</fullName>
    </alternativeName>
    <alternativeName>
        <fullName evidence="1">Chaperonin-60 1</fullName>
        <shortName evidence="1">Cpn60 1</shortName>
    </alternativeName>
</protein>
<evidence type="ECO:0000255" key="1">
    <source>
        <dbReference type="HAMAP-Rule" id="MF_00600"/>
    </source>
</evidence>
<evidence type="ECO:0000269" key="2">
    <source>
    </source>
</evidence>
<keyword id="KW-0067">ATP-binding</keyword>
<keyword id="KW-0143">Chaperone</keyword>
<keyword id="KW-0963">Cytoplasm</keyword>
<keyword id="KW-0413">Isomerase</keyword>
<keyword id="KW-0547">Nucleotide-binding</keyword>
<keyword id="KW-1185">Reference proteome</keyword>
<organism>
    <name type="scientific">Mycobacterium bovis (strain ATCC BAA-935 / AF2122/97)</name>
    <dbReference type="NCBI Taxonomy" id="233413"/>
    <lineage>
        <taxon>Bacteria</taxon>
        <taxon>Bacillati</taxon>
        <taxon>Actinomycetota</taxon>
        <taxon>Actinomycetes</taxon>
        <taxon>Mycobacteriales</taxon>
        <taxon>Mycobacteriaceae</taxon>
        <taxon>Mycobacterium</taxon>
        <taxon>Mycobacterium tuberculosis complex</taxon>
    </lineage>
</organism>